<reference key="1">
    <citation type="journal article" date="2001" name="Nature">
        <title>Massive gene decay in the leprosy bacillus.</title>
        <authorList>
            <person name="Cole S.T."/>
            <person name="Eiglmeier K."/>
            <person name="Parkhill J."/>
            <person name="James K.D."/>
            <person name="Thomson N.R."/>
            <person name="Wheeler P.R."/>
            <person name="Honore N."/>
            <person name="Garnier T."/>
            <person name="Churcher C.M."/>
            <person name="Harris D.E."/>
            <person name="Mungall K.L."/>
            <person name="Basham D."/>
            <person name="Brown D."/>
            <person name="Chillingworth T."/>
            <person name="Connor R."/>
            <person name="Davies R.M."/>
            <person name="Devlin K."/>
            <person name="Duthoy S."/>
            <person name="Feltwell T."/>
            <person name="Fraser A."/>
            <person name="Hamlin N."/>
            <person name="Holroyd S."/>
            <person name="Hornsby T."/>
            <person name="Jagels K."/>
            <person name="Lacroix C."/>
            <person name="Maclean J."/>
            <person name="Moule S."/>
            <person name="Murphy L.D."/>
            <person name="Oliver K."/>
            <person name="Quail M.A."/>
            <person name="Rajandream M.A."/>
            <person name="Rutherford K.M."/>
            <person name="Rutter S."/>
            <person name="Seeger K."/>
            <person name="Simon S."/>
            <person name="Simmonds M."/>
            <person name="Skelton J."/>
            <person name="Squares R."/>
            <person name="Squares S."/>
            <person name="Stevens K."/>
            <person name="Taylor K."/>
            <person name="Whitehead S."/>
            <person name="Woodward J.R."/>
            <person name="Barrell B.G."/>
        </authorList>
    </citation>
    <scope>NUCLEOTIDE SEQUENCE [LARGE SCALE GENOMIC DNA]</scope>
    <source>
        <strain>TN</strain>
    </source>
</reference>
<proteinExistence type="inferred from homology"/>
<evidence type="ECO:0000255" key="1">
    <source>
        <dbReference type="HAMAP-Rule" id="MF_00736"/>
    </source>
</evidence>
<evidence type="ECO:0000305" key="2"/>
<feature type="chain" id="PRO_0000104318" description="Large ribosomal subunit protein uL11">
    <location>
        <begin position="1"/>
        <end position="142"/>
    </location>
</feature>
<dbReference type="EMBL" id="AL583923">
    <property type="protein sequence ID" value="CAC30859.1"/>
    <property type="molecule type" value="Genomic_DNA"/>
</dbReference>
<dbReference type="PIR" id="C87147">
    <property type="entry name" value="C87147"/>
</dbReference>
<dbReference type="RefSeq" id="NP_302282.1">
    <property type="nucleotide sequence ID" value="NC_002677.1"/>
</dbReference>
<dbReference type="RefSeq" id="WP_010908603.1">
    <property type="nucleotide sequence ID" value="NC_002677.1"/>
</dbReference>
<dbReference type="SMR" id="Q9CBK1"/>
<dbReference type="STRING" id="272631.gene:17575753"/>
<dbReference type="KEGG" id="mle:ML1905"/>
<dbReference type="PATRIC" id="fig|272631.5.peg.3613"/>
<dbReference type="Leproma" id="ML1905"/>
<dbReference type="eggNOG" id="COG0080">
    <property type="taxonomic scope" value="Bacteria"/>
</dbReference>
<dbReference type="HOGENOM" id="CLU_074237_2_1_11"/>
<dbReference type="OrthoDB" id="9802408at2"/>
<dbReference type="Proteomes" id="UP000000806">
    <property type="component" value="Chromosome"/>
</dbReference>
<dbReference type="GO" id="GO:0022625">
    <property type="term" value="C:cytosolic large ribosomal subunit"/>
    <property type="evidence" value="ECO:0007669"/>
    <property type="project" value="TreeGrafter"/>
</dbReference>
<dbReference type="GO" id="GO:0070180">
    <property type="term" value="F:large ribosomal subunit rRNA binding"/>
    <property type="evidence" value="ECO:0007669"/>
    <property type="project" value="UniProtKB-UniRule"/>
</dbReference>
<dbReference type="GO" id="GO:0003735">
    <property type="term" value="F:structural constituent of ribosome"/>
    <property type="evidence" value="ECO:0007669"/>
    <property type="project" value="InterPro"/>
</dbReference>
<dbReference type="GO" id="GO:0006412">
    <property type="term" value="P:translation"/>
    <property type="evidence" value="ECO:0007669"/>
    <property type="project" value="UniProtKB-UniRule"/>
</dbReference>
<dbReference type="CDD" id="cd00349">
    <property type="entry name" value="Ribosomal_L11"/>
    <property type="match status" value="1"/>
</dbReference>
<dbReference type="FunFam" id="1.10.10.250:FF:000001">
    <property type="entry name" value="50S ribosomal protein L11"/>
    <property type="match status" value="1"/>
</dbReference>
<dbReference type="FunFam" id="3.30.1550.10:FF:000001">
    <property type="entry name" value="50S ribosomal protein L11"/>
    <property type="match status" value="1"/>
</dbReference>
<dbReference type="Gene3D" id="1.10.10.250">
    <property type="entry name" value="Ribosomal protein L11, C-terminal domain"/>
    <property type="match status" value="1"/>
</dbReference>
<dbReference type="Gene3D" id="3.30.1550.10">
    <property type="entry name" value="Ribosomal protein L11/L12, N-terminal domain"/>
    <property type="match status" value="1"/>
</dbReference>
<dbReference type="HAMAP" id="MF_00736">
    <property type="entry name" value="Ribosomal_uL11"/>
    <property type="match status" value="1"/>
</dbReference>
<dbReference type="InterPro" id="IPR000911">
    <property type="entry name" value="Ribosomal_uL11"/>
</dbReference>
<dbReference type="InterPro" id="IPR006519">
    <property type="entry name" value="Ribosomal_uL11_bac-typ"/>
</dbReference>
<dbReference type="InterPro" id="IPR020783">
    <property type="entry name" value="Ribosomal_uL11_C"/>
</dbReference>
<dbReference type="InterPro" id="IPR036769">
    <property type="entry name" value="Ribosomal_uL11_C_sf"/>
</dbReference>
<dbReference type="InterPro" id="IPR020785">
    <property type="entry name" value="Ribosomal_uL11_CS"/>
</dbReference>
<dbReference type="InterPro" id="IPR020784">
    <property type="entry name" value="Ribosomal_uL11_N"/>
</dbReference>
<dbReference type="InterPro" id="IPR036796">
    <property type="entry name" value="Ribosomal_uL11_N_sf"/>
</dbReference>
<dbReference type="NCBIfam" id="TIGR01632">
    <property type="entry name" value="L11_bact"/>
    <property type="match status" value="1"/>
</dbReference>
<dbReference type="PANTHER" id="PTHR11661">
    <property type="entry name" value="60S RIBOSOMAL PROTEIN L12"/>
    <property type="match status" value="1"/>
</dbReference>
<dbReference type="PANTHER" id="PTHR11661:SF1">
    <property type="entry name" value="LARGE RIBOSOMAL SUBUNIT PROTEIN UL11M"/>
    <property type="match status" value="1"/>
</dbReference>
<dbReference type="Pfam" id="PF00298">
    <property type="entry name" value="Ribosomal_L11"/>
    <property type="match status" value="1"/>
</dbReference>
<dbReference type="Pfam" id="PF03946">
    <property type="entry name" value="Ribosomal_L11_N"/>
    <property type="match status" value="1"/>
</dbReference>
<dbReference type="SMART" id="SM00649">
    <property type="entry name" value="RL11"/>
    <property type="match status" value="1"/>
</dbReference>
<dbReference type="SUPFAM" id="SSF54747">
    <property type="entry name" value="Ribosomal L11/L12e N-terminal domain"/>
    <property type="match status" value="1"/>
</dbReference>
<dbReference type="SUPFAM" id="SSF46906">
    <property type="entry name" value="Ribosomal protein L11, C-terminal domain"/>
    <property type="match status" value="1"/>
</dbReference>
<dbReference type="PROSITE" id="PS00359">
    <property type="entry name" value="RIBOSOMAL_L11"/>
    <property type="match status" value="1"/>
</dbReference>
<organism>
    <name type="scientific">Mycobacterium leprae (strain TN)</name>
    <dbReference type="NCBI Taxonomy" id="272631"/>
    <lineage>
        <taxon>Bacteria</taxon>
        <taxon>Bacillati</taxon>
        <taxon>Actinomycetota</taxon>
        <taxon>Actinomycetes</taxon>
        <taxon>Mycobacteriales</taxon>
        <taxon>Mycobacteriaceae</taxon>
        <taxon>Mycobacterium</taxon>
    </lineage>
</organism>
<comment type="function">
    <text evidence="1">Forms part of the ribosomal stalk which helps the ribosome interact with GTP-bound translation factors.</text>
</comment>
<comment type="subunit">
    <text evidence="1">Part of the ribosomal stalk of the 50S ribosomal subunit. Interacts with L10 and the large rRNA to form the base of the stalk. L10 forms an elongated spine to which L12 dimers bind in a sequential fashion forming a multimeric L10(L12)X complex.</text>
</comment>
<comment type="PTM">
    <text evidence="1">One or more lysine residues are methylated.</text>
</comment>
<comment type="similarity">
    <text evidence="1">Belongs to the universal ribosomal protein uL11 family.</text>
</comment>
<sequence length="142" mass="15003">MATKKKVAGLIKLQIQAGQANPAPPVGPALGQHGVNIMEFCKAYNAATENQRGQVIPVEITVYEDRSFTFALKTPPAAKLLLDAAGVGKGVAEPHKTKVVKVSWDQVREIAETKKADLNANDIDAAAKIIAGTARSMGITVE</sequence>
<name>RL11_MYCLE</name>
<protein>
    <recommendedName>
        <fullName evidence="1">Large ribosomal subunit protein uL11</fullName>
    </recommendedName>
    <alternativeName>
        <fullName evidence="2">50S ribosomal protein L11</fullName>
    </alternativeName>
</protein>
<keyword id="KW-0488">Methylation</keyword>
<keyword id="KW-1185">Reference proteome</keyword>
<keyword id="KW-0687">Ribonucleoprotein</keyword>
<keyword id="KW-0689">Ribosomal protein</keyword>
<keyword id="KW-0694">RNA-binding</keyword>
<keyword id="KW-0699">rRNA-binding</keyword>
<gene>
    <name evidence="1" type="primary">rplK</name>
    <name type="ordered locus">ML1905</name>
</gene>
<accession>Q9CBK1</accession>